<proteinExistence type="inferred from homology"/>
<dbReference type="EMBL" id="CP000270">
    <property type="protein sequence ID" value="ABE29654.1"/>
    <property type="molecule type" value="Genomic_DNA"/>
</dbReference>
<dbReference type="RefSeq" id="WP_011487389.1">
    <property type="nucleotide sequence ID" value="NC_007951.1"/>
</dbReference>
<dbReference type="SMR" id="Q142T5"/>
<dbReference type="STRING" id="266265.Bxe_A3329"/>
<dbReference type="KEGG" id="bxb:DR64_1029"/>
<dbReference type="KEGG" id="bxe:Bxe_A3329"/>
<dbReference type="PATRIC" id="fig|266265.5.peg.1148"/>
<dbReference type="eggNOG" id="COG0326">
    <property type="taxonomic scope" value="Bacteria"/>
</dbReference>
<dbReference type="OrthoDB" id="9802640at2"/>
<dbReference type="Proteomes" id="UP000001817">
    <property type="component" value="Chromosome 1"/>
</dbReference>
<dbReference type="GO" id="GO:0005737">
    <property type="term" value="C:cytoplasm"/>
    <property type="evidence" value="ECO:0007669"/>
    <property type="project" value="UniProtKB-SubCell"/>
</dbReference>
<dbReference type="GO" id="GO:0005524">
    <property type="term" value="F:ATP binding"/>
    <property type="evidence" value="ECO:0007669"/>
    <property type="project" value="UniProtKB-UniRule"/>
</dbReference>
<dbReference type="GO" id="GO:0016887">
    <property type="term" value="F:ATP hydrolysis activity"/>
    <property type="evidence" value="ECO:0007669"/>
    <property type="project" value="InterPro"/>
</dbReference>
<dbReference type="GO" id="GO:0140662">
    <property type="term" value="F:ATP-dependent protein folding chaperone"/>
    <property type="evidence" value="ECO:0007669"/>
    <property type="project" value="InterPro"/>
</dbReference>
<dbReference type="GO" id="GO:0051082">
    <property type="term" value="F:unfolded protein binding"/>
    <property type="evidence" value="ECO:0007669"/>
    <property type="project" value="UniProtKB-UniRule"/>
</dbReference>
<dbReference type="CDD" id="cd16927">
    <property type="entry name" value="HATPase_Hsp90-like"/>
    <property type="match status" value="1"/>
</dbReference>
<dbReference type="FunFam" id="3.30.230.80:FF:000002">
    <property type="entry name" value="Molecular chaperone HtpG"/>
    <property type="match status" value="1"/>
</dbReference>
<dbReference type="FunFam" id="3.30.565.10:FF:000009">
    <property type="entry name" value="Molecular chaperone HtpG"/>
    <property type="match status" value="1"/>
</dbReference>
<dbReference type="Gene3D" id="3.30.230.80">
    <property type="match status" value="1"/>
</dbReference>
<dbReference type="Gene3D" id="3.40.50.11260">
    <property type="match status" value="1"/>
</dbReference>
<dbReference type="Gene3D" id="1.20.120.790">
    <property type="entry name" value="Heat shock protein 90, C-terminal domain"/>
    <property type="match status" value="1"/>
</dbReference>
<dbReference type="Gene3D" id="3.30.565.10">
    <property type="entry name" value="Histidine kinase-like ATPase, C-terminal domain"/>
    <property type="match status" value="1"/>
</dbReference>
<dbReference type="HAMAP" id="MF_00505">
    <property type="entry name" value="HSP90"/>
    <property type="match status" value="1"/>
</dbReference>
<dbReference type="InterPro" id="IPR036890">
    <property type="entry name" value="HATPase_C_sf"/>
</dbReference>
<dbReference type="InterPro" id="IPR019805">
    <property type="entry name" value="Heat_shock_protein_90_CS"/>
</dbReference>
<dbReference type="InterPro" id="IPR037196">
    <property type="entry name" value="HSP90_C"/>
</dbReference>
<dbReference type="InterPro" id="IPR001404">
    <property type="entry name" value="Hsp90_fam"/>
</dbReference>
<dbReference type="InterPro" id="IPR020575">
    <property type="entry name" value="Hsp90_N"/>
</dbReference>
<dbReference type="InterPro" id="IPR020568">
    <property type="entry name" value="Ribosomal_Su5_D2-typ_SF"/>
</dbReference>
<dbReference type="NCBIfam" id="NF003555">
    <property type="entry name" value="PRK05218.1"/>
    <property type="match status" value="1"/>
</dbReference>
<dbReference type="PANTHER" id="PTHR11528">
    <property type="entry name" value="HEAT SHOCK PROTEIN 90 FAMILY MEMBER"/>
    <property type="match status" value="1"/>
</dbReference>
<dbReference type="Pfam" id="PF13589">
    <property type="entry name" value="HATPase_c_3"/>
    <property type="match status" value="1"/>
</dbReference>
<dbReference type="Pfam" id="PF00183">
    <property type="entry name" value="HSP90"/>
    <property type="match status" value="1"/>
</dbReference>
<dbReference type="PIRSF" id="PIRSF002583">
    <property type="entry name" value="Hsp90"/>
    <property type="match status" value="1"/>
</dbReference>
<dbReference type="PRINTS" id="PR00775">
    <property type="entry name" value="HEATSHOCK90"/>
</dbReference>
<dbReference type="SMART" id="SM00387">
    <property type="entry name" value="HATPase_c"/>
    <property type="match status" value="1"/>
</dbReference>
<dbReference type="SUPFAM" id="SSF55874">
    <property type="entry name" value="ATPase domain of HSP90 chaperone/DNA topoisomerase II/histidine kinase"/>
    <property type="match status" value="1"/>
</dbReference>
<dbReference type="SUPFAM" id="SSF110942">
    <property type="entry name" value="HSP90 C-terminal domain"/>
    <property type="match status" value="1"/>
</dbReference>
<dbReference type="SUPFAM" id="SSF54211">
    <property type="entry name" value="Ribosomal protein S5 domain 2-like"/>
    <property type="match status" value="1"/>
</dbReference>
<dbReference type="PROSITE" id="PS00298">
    <property type="entry name" value="HSP90"/>
    <property type="match status" value="1"/>
</dbReference>
<reference key="1">
    <citation type="journal article" date="2006" name="Proc. Natl. Acad. Sci. U.S.A.">
        <title>Burkholderia xenovorans LB400 harbors a multi-replicon, 9.73-Mbp genome shaped for versatility.</title>
        <authorList>
            <person name="Chain P.S.G."/>
            <person name="Denef V.J."/>
            <person name="Konstantinidis K.T."/>
            <person name="Vergez L.M."/>
            <person name="Agullo L."/>
            <person name="Reyes V.L."/>
            <person name="Hauser L."/>
            <person name="Cordova M."/>
            <person name="Gomez L."/>
            <person name="Gonzalez M."/>
            <person name="Land M."/>
            <person name="Lao V."/>
            <person name="Larimer F."/>
            <person name="LiPuma J.J."/>
            <person name="Mahenthiralingam E."/>
            <person name="Malfatti S.A."/>
            <person name="Marx C.J."/>
            <person name="Parnell J.J."/>
            <person name="Ramette A."/>
            <person name="Richardson P."/>
            <person name="Seeger M."/>
            <person name="Smith D."/>
            <person name="Spilker T."/>
            <person name="Sul W.J."/>
            <person name="Tsoi T.V."/>
            <person name="Ulrich L.E."/>
            <person name="Zhulin I.B."/>
            <person name="Tiedje J.M."/>
        </authorList>
    </citation>
    <scope>NUCLEOTIDE SEQUENCE [LARGE SCALE GENOMIC DNA]</scope>
    <source>
        <strain>LB400</strain>
    </source>
</reference>
<keyword id="KW-0067">ATP-binding</keyword>
<keyword id="KW-0143">Chaperone</keyword>
<keyword id="KW-0963">Cytoplasm</keyword>
<keyword id="KW-0547">Nucleotide-binding</keyword>
<keyword id="KW-1185">Reference proteome</keyword>
<keyword id="KW-0346">Stress response</keyword>
<name>HTPG_PARXL</name>
<comment type="function">
    <text evidence="1">Molecular chaperone. Has ATPase activity.</text>
</comment>
<comment type="subunit">
    <text evidence="1">Homodimer.</text>
</comment>
<comment type="subcellular location">
    <subcellularLocation>
        <location evidence="1">Cytoplasm</location>
    </subcellularLocation>
</comment>
<comment type="similarity">
    <text evidence="1">Belongs to the heat shock protein 90 family.</text>
</comment>
<protein>
    <recommendedName>
        <fullName evidence="1">Chaperone protein HtpG</fullName>
    </recommendedName>
    <alternativeName>
        <fullName evidence="1">Heat shock protein HtpG</fullName>
    </alternativeName>
    <alternativeName>
        <fullName evidence="1">High temperature protein G</fullName>
    </alternativeName>
</protein>
<feature type="chain" id="PRO_0000258505" description="Chaperone protein HtpG">
    <location>
        <begin position="1"/>
        <end position="634"/>
    </location>
</feature>
<feature type="region of interest" description="A; substrate-binding" evidence="1">
    <location>
        <begin position="1"/>
        <end position="339"/>
    </location>
</feature>
<feature type="region of interest" description="B" evidence="1">
    <location>
        <begin position="340"/>
        <end position="559"/>
    </location>
</feature>
<feature type="region of interest" description="C" evidence="1">
    <location>
        <begin position="560"/>
        <end position="634"/>
    </location>
</feature>
<evidence type="ECO:0000255" key="1">
    <source>
        <dbReference type="HAMAP-Rule" id="MF_00505"/>
    </source>
</evidence>
<accession>Q142T5</accession>
<gene>
    <name evidence="1" type="primary">htpG</name>
    <name type="ordered locus">Bxeno_A1116</name>
    <name type="ORF">Bxe_A3329</name>
</gene>
<organism>
    <name type="scientific">Paraburkholderia xenovorans (strain LB400)</name>
    <dbReference type="NCBI Taxonomy" id="266265"/>
    <lineage>
        <taxon>Bacteria</taxon>
        <taxon>Pseudomonadati</taxon>
        <taxon>Pseudomonadota</taxon>
        <taxon>Betaproteobacteria</taxon>
        <taxon>Burkholderiales</taxon>
        <taxon>Burkholderiaceae</taxon>
        <taxon>Paraburkholderia</taxon>
    </lineage>
</organism>
<sequence length="634" mass="71623">MAQETMSFQAEVKQLLHLMIHSLYSNKEIFLRELISNASDAADKLRFEAIENSALYENDPNLRIRVSYDKDARTITIDDNGIGMSRDEAIANLGTIARSGTKEFFGKLSGDQQKDAALIGQFGVGFYSGFIVADRITVETRRAGLPASEGVRWESAGEGDFAVEQIERAARGTTITLHLRADEDELLSSHRLKSIIQKYSDHVALPILMKKEEWDAEKSAMVTKDEDETVNQASALWTRSKSDITDEQYKQFYQHLSHDHQDPLTWTHNRVEGRSEYTQLLYVPTHAPFDMFNRDHRGGLKLYVKRVFIMDDAEQLLPAYLRFVKGVVDSADLPLNVSREILQESRDVKAIREGVTKRVLSMLEDLANSDNEADKEKYAGFWKEFGQVLKEGIGEDFANRERIAKLLRFASTHTDTPEQTVSLADYVARMKPEQTKIYYVTADTWQAATHSPHLEVFRKKGVEVLLLTDRVDEWILSFLTEFEGKPLQSVARGDLDLGALNDEEKEAQEKVSEEFKPLVEKMKEALKDKAKDVRLTFRLTDSPSCLVADDGEMSGYLQRMLKAAGQQAPSFHPILEVNPEHALVKGLHADSANFDDWCHLLFDQALLAEGGALEDPASFVKRTNALLLARANEA</sequence>